<name>RNC_GEOKA</name>
<dbReference type="EC" id="3.1.26.3" evidence="1"/>
<dbReference type="EMBL" id="BA000043">
    <property type="protein sequence ID" value="BAD75477.1"/>
    <property type="molecule type" value="Genomic_DNA"/>
</dbReference>
<dbReference type="RefSeq" id="WP_011230692.1">
    <property type="nucleotide sequence ID" value="NC_006510.1"/>
</dbReference>
<dbReference type="SMR" id="Q5L0Q3"/>
<dbReference type="STRING" id="235909.GK1192"/>
<dbReference type="GeneID" id="32063086"/>
<dbReference type="KEGG" id="gka:GK1192"/>
<dbReference type="eggNOG" id="COG0571">
    <property type="taxonomic scope" value="Bacteria"/>
</dbReference>
<dbReference type="HOGENOM" id="CLU_000907_1_3_9"/>
<dbReference type="Proteomes" id="UP000001172">
    <property type="component" value="Chromosome"/>
</dbReference>
<dbReference type="GO" id="GO:0005737">
    <property type="term" value="C:cytoplasm"/>
    <property type="evidence" value="ECO:0007669"/>
    <property type="project" value="UniProtKB-SubCell"/>
</dbReference>
<dbReference type="GO" id="GO:0003725">
    <property type="term" value="F:double-stranded RNA binding"/>
    <property type="evidence" value="ECO:0007669"/>
    <property type="project" value="TreeGrafter"/>
</dbReference>
<dbReference type="GO" id="GO:0046872">
    <property type="term" value="F:metal ion binding"/>
    <property type="evidence" value="ECO:0007669"/>
    <property type="project" value="UniProtKB-KW"/>
</dbReference>
<dbReference type="GO" id="GO:0004525">
    <property type="term" value="F:ribonuclease III activity"/>
    <property type="evidence" value="ECO:0007669"/>
    <property type="project" value="UniProtKB-UniRule"/>
</dbReference>
<dbReference type="GO" id="GO:0019843">
    <property type="term" value="F:rRNA binding"/>
    <property type="evidence" value="ECO:0007669"/>
    <property type="project" value="UniProtKB-KW"/>
</dbReference>
<dbReference type="GO" id="GO:0006397">
    <property type="term" value="P:mRNA processing"/>
    <property type="evidence" value="ECO:0007669"/>
    <property type="project" value="UniProtKB-UniRule"/>
</dbReference>
<dbReference type="GO" id="GO:0010468">
    <property type="term" value="P:regulation of gene expression"/>
    <property type="evidence" value="ECO:0007669"/>
    <property type="project" value="TreeGrafter"/>
</dbReference>
<dbReference type="GO" id="GO:0006364">
    <property type="term" value="P:rRNA processing"/>
    <property type="evidence" value="ECO:0007669"/>
    <property type="project" value="UniProtKB-UniRule"/>
</dbReference>
<dbReference type="GO" id="GO:0008033">
    <property type="term" value="P:tRNA processing"/>
    <property type="evidence" value="ECO:0007669"/>
    <property type="project" value="UniProtKB-KW"/>
</dbReference>
<dbReference type="CDD" id="cd10845">
    <property type="entry name" value="DSRM_RNAse_III_family"/>
    <property type="match status" value="1"/>
</dbReference>
<dbReference type="CDD" id="cd00593">
    <property type="entry name" value="RIBOc"/>
    <property type="match status" value="1"/>
</dbReference>
<dbReference type="FunFam" id="1.10.1520.10:FF:000001">
    <property type="entry name" value="Ribonuclease 3"/>
    <property type="match status" value="1"/>
</dbReference>
<dbReference type="FunFam" id="3.30.160.20:FF:000003">
    <property type="entry name" value="Ribonuclease 3"/>
    <property type="match status" value="1"/>
</dbReference>
<dbReference type="Gene3D" id="3.30.160.20">
    <property type="match status" value="1"/>
</dbReference>
<dbReference type="Gene3D" id="1.10.1520.10">
    <property type="entry name" value="Ribonuclease III domain"/>
    <property type="match status" value="1"/>
</dbReference>
<dbReference type="HAMAP" id="MF_00104">
    <property type="entry name" value="RNase_III"/>
    <property type="match status" value="1"/>
</dbReference>
<dbReference type="InterPro" id="IPR014720">
    <property type="entry name" value="dsRBD_dom"/>
</dbReference>
<dbReference type="InterPro" id="IPR011907">
    <property type="entry name" value="RNase_III"/>
</dbReference>
<dbReference type="InterPro" id="IPR000999">
    <property type="entry name" value="RNase_III_dom"/>
</dbReference>
<dbReference type="InterPro" id="IPR036389">
    <property type="entry name" value="RNase_III_sf"/>
</dbReference>
<dbReference type="NCBIfam" id="TIGR02191">
    <property type="entry name" value="RNaseIII"/>
    <property type="match status" value="1"/>
</dbReference>
<dbReference type="PANTHER" id="PTHR11207:SF0">
    <property type="entry name" value="RIBONUCLEASE 3"/>
    <property type="match status" value="1"/>
</dbReference>
<dbReference type="PANTHER" id="PTHR11207">
    <property type="entry name" value="RIBONUCLEASE III"/>
    <property type="match status" value="1"/>
</dbReference>
<dbReference type="Pfam" id="PF00035">
    <property type="entry name" value="dsrm"/>
    <property type="match status" value="1"/>
</dbReference>
<dbReference type="Pfam" id="PF14622">
    <property type="entry name" value="Ribonucleas_3_3"/>
    <property type="match status" value="1"/>
</dbReference>
<dbReference type="SMART" id="SM00358">
    <property type="entry name" value="DSRM"/>
    <property type="match status" value="1"/>
</dbReference>
<dbReference type="SMART" id="SM00535">
    <property type="entry name" value="RIBOc"/>
    <property type="match status" value="1"/>
</dbReference>
<dbReference type="SUPFAM" id="SSF54768">
    <property type="entry name" value="dsRNA-binding domain-like"/>
    <property type="match status" value="1"/>
</dbReference>
<dbReference type="SUPFAM" id="SSF69065">
    <property type="entry name" value="RNase III domain-like"/>
    <property type="match status" value="1"/>
</dbReference>
<dbReference type="PROSITE" id="PS50137">
    <property type="entry name" value="DS_RBD"/>
    <property type="match status" value="1"/>
</dbReference>
<dbReference type="PROSITE" id="PS00517">
    <property type="entry name" value="RNASE_3_1"/>
    <property type="match status" value="1"/>
</dbReference>
<dbReference type="PROSITE" id="PS50142">
    <property type="entry name" value="RNASE_3_2"/>
    <property type="match status" value="1"/>
</dbReference>
<organism>
    <name type="scientific">Geobacillus kaustophilus (strain HTA426)</name>
    <dbReference type="NCBI Taxonomy" id="235909"/>
    <lineage>
        <taxon>Bacteria</taxon>
        <taxon>Bacillati</taxon>
        <taxon>Bacillota</taxon>
        <taxon>Bacilli</taxon>
        <taxon>Bacillales</taxon>
        <taxon>Anoxybacillaceae</taxon>
        <taxon>Geobacillus</taxon>
        <taxon>Geobacillus thermoleovorans group</taxon>
    </lineage>
</organism>
<feature type="chain" id="PRO_0000228533" description="Ribonuclease 3">
    <location>
        <begin position="1"/>
        <end position="246"/>
    </location>
</feature>
<feature type="domain" description="RNase III" evidence="1">
    <location>
        <begin position="18"/>
        <end position="147"/>
    </location>
</feature>
<feature type="domain" description="DRBM" evidence="1">
    <location>
        <begin position="173"/>
        <end position="242"/>
    </location>
</feature>
<feature type="active site" evidence="1">
    <location>
        <position position="64"/>
    </location>
</feature>
<feature type="active site" evidence="1">
    <location>
        <position position="136"/>
    </location>
</feature>
<feature type="binding site" evidence="1">
    <location>
        <position position="60"/>
    </location>
    <ligand>
        <name>Mg(2+)</name>
        <dbReference type="ChEBI" id="CHEBI:18420"/>
    </ligand>
</feature>
<feature type="binding site" evidence="1">
    <location>
        <position position="133"/>
    </location>
    <ligand>
        <name>Mg(2+)</name>
        <dbReference type="ChEBI" id="CHEBI:18420"/>
    </ligand>
</feature>
<feature type="binding site" evidence="1">
    <location>
        <position position="136"/>
    </location>
    <ligand>
        <name>Mg(2+)</name>
        <dbReference type="ChEBI" id="CHEBI:18420"/>
    </ligand>
</feature>
<sequence length="246" mass="27859">MSKQKDKERIHEKRRAKFQELQNKIGITFRNEKLLIQAFTHSSYVNEHRRRLHEDNERLEFLGDAVLELTVSQYLFQKFPHMSEGQLTKLRAAIVCEPSLVKFANALSFGELVLLGKGEELTGGRTRPALLADVFEAFIGALYLDQGMDAVIRFLEKTMFPKIDEGAFSHVMDFKSQLQELVQRDGSGTLEYAILEEKGPAHNKEFVARVALNGQELGIGVGRSKKEAEQHAAQMALETLRAADQQ</sequence>
<protein>
    <recommendedName>
        <fullName evidence="1">Ribonuclease 3</fullName>
        <ecNumber evidence="1">3.1.26.3</ecNumber>
    </recommendedName>
    <alternativeName>
        <fullName evidence="1">Ribonuclease III</fullName>
        <shortName evidence="1">RNase III</shortName>
    </alternativeName>
</protein>
<proteinExistence type="inferred from homology"/>
<gene>
    <name evidence="1" type="primary">rnc</name>
    <name type="ordered locus">GK1192</name>
</gene>
<evidence type="ECO:0000255" key="1">
    <source>
        <dbReference type="HAMAP-Rule" id="MF_00104"/>
    </source>
</evidence>
<reference key="1">
    <citation type="journal article" date="2004" name="Nucleic Acids Res.">
        <title>Thermoadaptation trait revealed by the genome sequence of thermophilic Geobacillus kaustophilus.</title>
        <authorList>
            <person name="Takami H."/>
            <person name="Takaki Y."/>
            <person name="Chee G.-J."/>
            <person name="Nishi S."/>
            <person name="Shimamura S."/>
            <person name="Suzuki H."/>
            <person name="Matsui S."/>
            <person name="Uchiyama I."/>
        </authorList>
    </citation>
    <scope>NUCLEOTIDE SEQUENCE [LARGE SCALE GENOMIC DNA]</scope>
    <source>
        <strain>HTA426</strain>
    </source>
</reference>
<accession>Q5L0Q3</accession>
<keyword id="KW-0963">Cytoplasm</keyword>
<keyword id="KW-0255">Endonuclease</keyword>
<keyword id="KW-0378">Hydrolase</keyword>
<keyword id="KW-0460">Magnesium</keyword>
<keyword id="KW-0479">Metal-binding</keyword>
<keyword id="KW-0507">mRNA processing</keyword>
<keyword id="KW-0540">Nuclease</keyword>
<keyword id="KW-1185">Reference proteome</keyword>
<keyword id="KW-0694">RNA-binding</keyword>
<keyword id="KW-0698">rRNA processing</keyword>
<keyword id="KW-0699">rRNA-binding</keyword>
<keyword id="KW-0819">tRNA processing</keyword>
<comment type="function">
    <text evidence="1">Digests double-stranded RNA. Involved in the processing of primary rRNA transcript to yield the immediate precursors to the large and small rRNAs (23S and 16S). Processes some mRNAs, and tRNAs when they are encoded in the rRNA operon. Processes pre-crRNA and tracrRNA of type II CRISPR loci if present in the organism.</text>
</comment>
<comment type="catalytic activity">
    <reaction evidence="1">
        <text>Endonucleolytic cleavage to 5'-phosphomonoester.</text>
        <dbReference type="EC" id="3.1.26.3"/>
    </reaction>
</comment>
<comment type="cofactor">
    <cofactor evidence="1">
        <name>Mg(2+)</name>
        <dbReference type="ChEBI" id="CHEBI:18420"/>
    </cofactor>
</comment>
<comment type="subunit">
    <text evidence="1">Homodimer.</text>
</comment>
<comment type="subcellular location">
    <subcellularLocation>
        <location evidence="1">Cytoplasm</location>
    </subcellularLocation>
</comment>
<comment type="similarity">
    <text evidence="1">Belongs to the ribonuclease III family.</text>
</comment>